<sequence>MRTPTHDEFSGRLDSLNGDRSNVFGPELGEFSNADRRADELGDKETKTGTTTVGIKTEEGVVLATDMRASMGYMVSSKDVQKVEEIHPTGALTIAGSVSAAQSLISSLRAEVRLYEARRGEDMSMQALSTLVGNFLRSGGFYVVQPILGGVDETGPHIYSIDPAGSILEEEYTVTGSGSQYALGVLEQEFEDGLSIEEAKGVATKAIRSAVERDLASGNGINIAVVTEDGVDIQRHQNFEGLE</sequence>
<reference key="1">
    <citation type="journal article" date="1999" name="J. Bacteriol.">
        <title>Halophilic 20S proteasomes of the archaeon Haloferax volcanii: purification, characterization, and gene sequence analysis.</title>
        <authorList>
            <person name="Wilson H.L."/>
            <person name="Aldrich H.C."/>
            <person name="Maupin-Furlow J."/>
        </authorList>
    </citation>
    <scope>NUCLEOTIDE SEQUENCE [GENOMIC DNA]</scope>
    <scope>PROTEIN SEQUENCE OF 50-79</scope>
    <scope>FUNCTION</scope>
    <scope>CATALYTIC ACTIVITY</scope>
    <scope>SUBSTRATE SPECIFICITY</scope>
    <scope>BIOPHYSICOCHEMICAL PROPERTIES</scope>
    <scope>ACTIVITY REGULATION</scope>
    <scope>SALT REQUIREMENT</scope>
    <scope>SUBUNIT</scope>
</reference>
<reference key="2">
    <citation type="journal article" date="2010" name="PLoS ONE">
        <title>The complete genome sequence of Haloferax volcanii DS2, a model archaeon.</title>
        <authorList>
            <person name="Hartman A.L."/>
            <person name="Norais C."/>
            <person name="Badger J.H."/>
            <person name="Delmas S."/>
            <person name="Haldenby S."/>
            <person name="Madupu R."/>
            <person name="Robinson J."/>
            <person name="Khouri H."/>
            <person name="Ren Q."/>
            <person name="Lowe T.M."/>
            <person name="Maupin-Furlow J."/>
            <person name="Pohlschroder M."/>
            <person name="Daniels C."/>
            <person name="Pfeiffer F."/>
            <person name="Allers T."/>
            <person name="Eisen J.A."/>
        </authorList>
    </citation>
    <scope>NUCLEOTIDE SEQUENCE [LARGE SCALE GENOMIC DNA]</scope>
    <source>
        <strain>ATCC 29605 / DSM 3757 / JCM 8879 / NBRC 14742 / NCIMB 2012 / VKM B-1768 / DS2</strain>
    </source>
</reference>
<reference key="3">
    <citation type="journal article" date="2003" name="J. Bacteriol.">
        <title>Subunit topology of two 20S proteasomes from Haloferax volcanii.</title>
        <authorList>
            <person name="Kaczowka S.J."/>
            <person name="Maupin-Furlow J.A."/>
        </authorList>
    </citation>
    <scope>SUBUNIT</scope>
</reference>
<reference key="4">
    <citation type="journal article" date="2004" name="J. Bacteriol.">
        <title>Differential regulation of the PanA and PanB proteasome-activating nucleotidase and 20S proteasomal proteins of the haloarchaeon Haloferax volcanii.</title>
        <authorList>
            <person name="Reuter C.J."/>
            <person name="Kaczowka S.J."/>
            <person name="Maupin-Furlow J.A."/>
        </authorList>
    </citation>
    <scope>INDUCTION</scope>
</reference>
<reference key="5">
    <citation type="journal article" date="2006" name="J. Bacteriol.">
        <title>Posttranslational modification of the 20S proteasomal proteins of the archaeon Haloferax volcanii.</title>
        <authorList>
            <person name="Humbard M.A."/>
            <person name="Stevens S.M. Jr."/>
            <person name="Maupin-Furlow J.A."/>
        </authorList>
    </citation>
    <scope>PHOSPHORYLATION AT SER-129</scope>
</reference>
<reference key="6">
    <citation type="journal article" date="2008" name="J. Bacteriol.">
        <title>Proteasomal components required for cell growth and stress responses in the haloarchaeon Haloferax volcanii.</title>
        <authorList>
            <person name="Zhou G."/>
            <person name="Kowalczyk D."/>
            <person name="Humbard M.A."/>
            <person name="Rohatgi S."/>
            <person name="Maupin-Furlow J.A."/>
        </authorList>
    </citation>
    <scope>DISRUPTION PHENOTYPE</scope>
</reference>
<comment type="function">
    <text evidence="1 3">Component of the proteasome core, a large protease complex with broad specificity involved in protein degradation. The H.volcanii alpha1-beta proteasome is able to cleave oligopeptides after Phe, Tyr and Trp, poorly after Glu but not after Arg. Thus, displays chymotrypsin-like activity, low caspase-like activity but no trypsin-like activity.</text>
</comment>
<comment type="catalytic activity">
    <reaction evidence="1 3">
        <text>Cleavage of peptide bonds with very broad specificity.</text>
        <dbReference type="EC" id="3.4.25.1"/>
    </reaction>
</comment>
<comment type="activity regulation">
    <text evidence="1 3">The formation of the proteasomal ATPase PAN-20S proteasome complex, via the docking of the C-termini of PAN into the intersubunit pockets in the alpha-rings, triggers opening of the gate for substrate entry. Interconversion between the open-gate and close-gate conformations leads to a dynamic regulation of the 20S proteasome proteolysis activity (By similarity). In vitro, the chymotrypsin-like activity of the alpha1-beta proteasome is potently inhibited by carbobenzoxyl-leucinyl-leucinyl-leucinal-H (MG132) and significantly by N-acetyl-leucinyl-leucinyl-norleucinal-H (calpain inhibitor I).</text>
</comment>
<comment type="biophysicochemical properties">
    <phDependence>
        <text evidence="3">Optimum pH is 7.0-9.3 for the Suc-LLVY-Amc hydrolyzing activity (with the alpha1-beta proteasome subtype).</text>
    </phDependence>
    <temperatureDependence>
        <text evidence="3">Optimum temperature is 75 degrees Celsius for the Suc-LLVY-Amc hydrolyzing activity (with the alpha1-beta proteasome subtype).</text>
    </temperatureDependence>
</comment>
<comment type="subunit">
    <text evidence="3 4">The 20S proteasome core is composed of 14 alpha and 14 beta subunits that assemble into four stacked heptameric rings, resulting in a barrel-shaped structure. The two inner rings, each composed of seven catalytic beta subunits, are sandwiched by two outer rings, each composed of seven alpha subunits. H.volcanii produces at least 2 types of 20S proteasomes: an alpha1-beta proteasome and a proteasome containing all three subunits (alpha1, alpha2, and beta) that appears to be asymmetrical with homo-oligomeric alpha1 and alpha2 rings positioned on separate ends. The catalytic chamber with the active sites is on the inside of the barrel. Has probably a gated structure, the ends of the cylinder being occluded by the N-termini of the alpha-subunits. Is likely capped at one or both ends by the proteasome regulatory ATPase, PAN.</text>
</comment>
<comment type="subcellular location">
    <subcellularLocation>
        <location evidence="1">Cytoplasm</location>
    </subcellularLocation>
</comment>
<comment type="induction">
    <text evidence="5">Up-regulated at the mRNA level during transition from exponential to stationary phase. However, at the protein level, PsmB is expressed at a high and relatively constant level throughout growth.</text>
</comment>
<comment type="disruption phenotype">
    <text evidence="7">Strains lacking psmB gene are inviable.</text>
</comment>
<comment type="miscellaneous">
    <text>H.volcanii proteasome requires high concentrations of salt, similar to the extracellular environment and cytoplasm of this organism, for complex stability and optimal activity.</text>
</comment>
<comment type="similarity">
    <text evidence="1">Belongs to the peptidase T1B family.</text>
</comment>
<organism>
    <name type="scientific">Haloferax volcanii (strain ATCC 29605 / DSM 3757 / JCM 8879 / NBRC 14742 / NCIMB 2012 / VKM B-1768 / DS2)</name>
    <name type="common">Halobacterium volcanii</name>
    <dbReference type="NCBI Taxonomy" id="309800"/>
    <lineage>
        <taxon>Archaea</taxon>
        <taxon>Methanobacteriati</taxon>
        <taxon>Methanobacteriota</taxon>
        <taxon>Stenosarchaea group</taxon>
        <taxon>Halobacteria</taxon>
        <taxon>Halobacteriales</taxon>
        <taxon>Haloferacaceae</taxon>
        <taxon>Haloferax</taxon>
    </lineage>
</organism>
<feature type="propeptide" id="PRO_0000397605" description="Removed in mature form; by autocatalysis" evidence="1 3">
    <location>
        <begin position="1"/>
        <end position="49"/>
    </location>
</feature>
<feature type="chain" id="PRO_0000397606" description="Proteasome subunit beta">
    <location>
        <begin position="50"/>
        <end position="243"/>
    </location>
</feature>
<feature type="region of interest" description="Disordered" evidence="2">
    <location>
        <begin position="1"/>
        <end position="50"/>
    </location>
</feature>
<feature type="compositionally biased region" description="Basic and acidic residues" evidence="2">
    <location>
        <begin position="1"/>
        <end position="11"/>
    </location>
</feature>
<feature type="compositionally biased region" description="Basic and acidic residues" evidence="2">
    <location>
        <begin position="33"/>
        <end position="47"/>
    </location>
</feature>
<feature type="active site" description="Nucleophile" evidence="1">
    <location>
        <position position="50"/>
    </location>
</feature>
<feature type="modified residue" description="Phosphoserine" evidence="6">
    <location>
        <position position="129"/>
    </location>
</feature>
<dbReference type="EC" id="3.4.25.1" evidence="1"/>
<dbReference type="EMBL" id="AF126262">
    <property type="protein sequence ID" value="AAD53406.1"/>
    <property type="molecule type" value="Genomic_DNA"/>
</dbReference>
<dbReference type="EMBL" id="CP001956">
    <property type="protein sequence ID" value="ADE03141.1"/>
    <property type="molecule type" value="Genomic_DNA"/>
</dbReference>
<dbReference type="PIR" id="T48677">
    <property type="entry name" value="T48677"/>
</dbReference>
<dbReference type="RefSeq" id="WP_004041440.1">
    <property type="nucleotide sequence ID" value="NC_013967.1"/>
</dbReference>
<dbReference type="SMR" id="D4GYZ1"/>
<dbReference type="STRING" id="309800.HVO_1562"/>
<dbReference type="MEROPS" id="T01.002"/>
<dbReference type="iPTMnet" id="D4GYZ1"/>
<dbReference type="PaxDb" id="309800-C498_03165"/>
<dbReference type="EnsemblBacteria" id="ADE03141">
    <property type="protein sequence ID" value="ADE03141"/>
    <property type="gene ID" value="HVO_1562"/>
</dbReference>
<dbReference type="GeneID" id="8923965"/>
<dbReference type="KEGG" id="hvo:HVO_1562"/>
<dbReference type="eggNOG" id="arCOG00970">
    <property type="taxonomic scope" value="Archaea"/>
</dbReference>
<dbReference type="HOGENOM" id="CLU_035750_7_2_2"/>
<dbReference type="OrthoDB" id="6330at2157"/>
<dbReference type="Proteomes" id="UP000008243">
    <property type="component" value="Chromosome"/>
</dbReference>
<dbReference type="GO" id="GO:0005737">
    <property type="term" value="C:cytoplasm"/>
    <property type="evidence" value="ECO:0007669"/>
    <property type="project" value="UniProtKB-SubCell"/>
</dbReference>
<dbReference type="GO" id="GO:0019774">
    <property type="term" value="C:proteasome core complex, beta-subunit complex"/>
    <property type="evidence" value="ECO:0000314"/>
    <property type="project" value="UniProtKB"/>
</dbReference>
<dbReference type="GO" id="GO:0004175">
    <property type="term" value="F:endopeptidase activity"/>
    <property type="evidence" value="ECO:0000314"/>
    <property type="project" value="UniProtKB"/>
</dbReference>
<dbReference type="GO" id="GO:0004298">
    <property type="term" value="F:threonine-type endopeptidase activity"/>
    <property type="evidence" value="ECO:0007669"/>
    <property type="project" value="UniProtKB-UniRule"/>
</dbReference>
<dbReference type="GO" id="GO:0010498">
    <property type="term" value="P:proteasomal protein catabolic process"/>
    <property type="evidence" value="ECO:0000314"/>
    <property type="project" value="UniProtKB"/>
</dbReference>
<dbReference type="CDD" id="cd03764">
    <property type="entry name" value="proteasome_beta_archeal"/>
    <property type="match status" value="1"/>
</dbReference>
<dbReference type="FunFam" id="3.60.20.10:FF:000049">
    <property type="entry name" value="Proteasome subunit beta"/>
    <property type="match status" value="1"/>
</dbReference>
<dbReference type="Gene3D" id="3.60.20.10">
    <property type="entry name" value="Glutamine Phosphoribosylpyrophosphate, subunit 1, domain 1"/>
    <property type="match status" value="1"/>
</dbReference>
<dbReference type="HAMAP" id="MF_02113_A">
    <property type="entry name" value="Proteasome_B_A"/>
    <property type="match status" value="1"/>
</dbReference>
<dbReference type="InterPro" id="IPR029055">
    <property type="entry name" value="Ntn_hydrolases_N"/>
</dbReference>
<dbReference type="InterPro" id="IPR019983">
    <property type="entry name" value="Pept_T1A_Psome_bsu_arc"/>
</dbReference>
<dbReference type="InterPro" id="IPR000243">
    <property type="entry name" value="Pept_T1A_subB"/>
</dbReference>
<dbReference type="InterPro" id="IPR001353">
    <property type="entry name" value="Proteasome_sua/b"/>
</dbReference>
<dbReference type="InterPro" id="IPR023333">
    <property type="entry name" value="Proteasome_suB-type"/>
</dbReference>
<dbReference type="NCBIfam" id="TIGR03634">
    <property type="entry name" value="arc_protsome_B"/>
    <property type="match status" value="1"/>
</dbReference>
<dbReference type="PANTHER" id="PTHR32194:SF0">
    <property type="entry name" value="ATP-DEPENDENT PROTEASE SUBUNIT HSLV"/>
    <property type="match status" value="1"/>
</dbReference>
<dbReference type="PANTHER" id="PTHR32194">
    <property type="entry name" value="METALLOPROTEASE TLDD"/>
    <property type="match status" value="1"/>
</dbReference>
<dbReference type="Pfam" id="PF00227">
    <property type="entry name" value="Proteasome"/>
    <property type="match status" value="1"/>
</dbReference>
<dbReference type="PRINTS" id="PR00141">
    <property type="entry name" value="PROTEASOME"/>
</dbReference>
<dbReference type="SUPFAM" id="SSF56235">
    <property type="entry name" value="N-terminal nucleophile aminohydrolases (Ntn hydrolases)"/>
    <property type="match status" value="1"/>
</dbReference>
<dbReference type="PROSITE" id="PS51476">
    <property type="entry name" value="PROTEASOME_BETA_2"/>
    <property type="match status" value="1"/>
</dbReference>
<evidence type="ECO:0000255" key="1">
    <source>
        <dbReference type="HAMAP-Rule" id="MF_02113"/>
    </source>
</evidence>
<evidence type="ECO:0000256" key="2">
    <source>
        <dbReference type="SAM" id="MobiDB-lite"/>
    </source>
</evidence>
<evidence type="ECO:0000269" key="3">
    <source>
    </source>
</evidence>
<evidence type="ECO:0000269" key="4">
    <source>
    </source>
</evidence>
<evidence type="ECO:0000269" key="5">
    <source>
    </source>
</evidence>
<evidence type="ECO:0000269" key="6">
    <source>
    </source>
</evidence>
<evidence type="ECO:0000269" key="7">
    <source>
    </source>
</evidence>
<protein>
    <recommendedName>
        <fullName evidence="1">Proteasome subunit beta</fullName>
        <ecNumber evidence="1">3.4.25.1</ecNumber>
    </recommendedName>
    <alternativeName>
        <fullName evidence="1">20S proteasome beta subunit</fullName>
    </alternativeName>
    <alternativeName>
        <fullName evidence="1">Proteasome core protein PsmB</fullName>
    </alternativeName>
</protein>
<gene>
    <name evidence="1" type="primary">psmB</name>
    <name type="ordered locus">HVO_1562</name>
</gene>
<accession>D4GYZ1</accession>
<accession>Q9V2V4</accession>
<keyword id="KW-0068">Autocatalytic cleavage</keyword>
<keyword id="KW-0963">Cytoplasm</keyword>
<keyword id="KW-0903">Direct protein sequencing</keyword>
<keyword id="KW-0378">Hydrolase</keyword>
<keyword id="KW-0597">Phosphoprotein</keyword>
<keyword id="KW-0645">Protease</keyword>
<keyword id="KW-0647">Proteasome</keyword>
<keyword id="KW-1185">Reference proteome</keyword>
<keyword id="KW-0888">Threonine protease</keyword>
<keyword id="KW-0865">Zymogen</keyword>
<name>PSB_HALVD</name>
<proteinExistence type="evidence at protein level"/>